<evidence type="ECO:0000255" key="1">
    <source>
        <dbReference type="HAMAP-Rule" id="MF_01577"/>
    </source>
</evidence>
<gene>
    <name evidence="1" type="primary">mdtD</name>
    <name type="ordered locus">SEN2125</name>
</gene>
<name>MDTD_SALEP</name>
<sequence>MTELPDNTRWQLWIVAFGFFMQSLDTTIVNTALPSMAKSLGESPLHMHMVVVSYVLTVAVMLPASGWLADKIGVRNIFFAAIVLFTLGSLFCALSGTLNQLVLARVLQGVGGAMMVPVGRLTVMKIVPRAQYMAAMTFVTLPGQIGPLLGPALGGVLVEYASWHWIFLINIPVGIVGAMATFMLMPNYTIETRRFDLPGFLLLAIGMAVLTLALDGSKSMGISPWTLAGLAAGGAAAILLYLFHAKKNSGALFSLRLFRTPTFSLGLLGSFAGRIGSGMLPFMTPVFLQIGLGFSPFHAGLMMIPMVLGSMGMKRIVVQIVNRFGYRRVLVATTLGLALVSLLFMSVALLGWYYLLPLVLLLQGMVNSARFSSMNTLTLKDLPDTLASSGNSLLSMIMQLSMSIGVTIAGMLLGMFGQQHIGIDSSATHHVFMYTWLCMAVIIALPAIIFARVPNDTQQNMVISRRKRSL</sequence>
<keyword id="KW-0997">Cell inner membrane</keyword>
<keyword id="KW-1003">Cell membrane</keyword>
<keyword id="KW-0472">Membrane</keyword>
<keyword id="KW-0812">Transmembrane</keyword>
<keyword id="KW-1133">Transmembrane helix</keyword>
<keyword id="KW-0813">Transport</keyword>
<proteinExistence type="inferred from homology"/>
<reference key="1">
    <citation type="journal article" date="2008" name="Genome Res.">
        <title>Comparative genome analysis of Salmonella enteritidis PT4 and Salmonella gallinarum 287/91 provides insights into evolutionary and host adaptation pathways.</title>
        <authorList>
            <person name="Thomson N.R."/>
            <person name="Clayton D.J."/>
            <person name="Windhorst D."/>
            <person name="Vernikos G."/>
            <person name="Davidson S."/>
            <person name="Churcher C."/>
            <person name="Quail M.A."/>
            <person name="Stevens M."/>
            <person name="Jones M.A."/>
            <person name="Watson M."/>
            <person name="Barron A."/>
            <person name="Layton A."/>
            <person name="Pickard D."/>
            <person name="Kingsley R.A."/>
            <person name="Bignell A."/>
            <person name="Clark L."/>
            <person name="Harris B."/>
            <person name="Ormond D."/>
            <person name="Abdellah Z."/>
            <person name="Brooks K."/>
            <person name="Cherevach I."/>
            <person name="Chillingworth T."/>
            <person name="Woodward J."/>
            <person name="Norberczak H."/>
            <person name="Lord A."/>
            <person name="Arrowsmith C."/>
            <person name="Jagels K."/>
            <person name="Moule S."/>
            <person name="Mungall K."/>
            <person name="Saunders M."/>
            <person name="Whitehead S."/>
            <person name="Chabalgoity J.A."/>
            <person name="Maskell D."/>
            <person name="Humphreys T."/>
            <person name="Roberts M."/>
            <person name="Barrow P.A."/>
            <person name="Dougan G."/>
            <person name="Parkhill J."/>
        </authorList>
    </citation>
    <scope>NUCLEOTIDE SEQUENCE [LARGE SCALE GENOMIC DNA]</scope>
    <source>
        <strain>P125109</strain>
    </source>
</reference>
<feature type="chain" id="PRO_0000365285" description="Putative multidrug resistance protein MdtD">
    <location>
        <begin position="1"/>
        <end position="470"/>
    </location>
</feature>
<feature type="topological domain" description="Periplasmic" evidence="1">
    <location>
        <begin position="1"/>
        <end position="11"/>
    </location>
</feature>
<feature type="transmembrane region" description="Helical" evidence="1">
    <location>
        <begin position="12"/>
        <end position="32"/>
    </location>
</feature>
<feature type="topological domain" description="Cytoplasmic" evidence="1">
    <location>
        <begin position="33"/>
        <end position="48"/>
    </location>
</feature>
<feature type="transmembrane region" description="Helical" evidence="1">
    <location>
        <begin position="49"/>
        <end position="69"/>
    </location>
</feature>
<feature type="topological domain" description="Periplasmic" evidence="1">
    <location>
        <begin position="70"/>
        <end position="76"/>
    </location>
</feature>
<feature type="transmembrane region" description="Helical" evidence="1">
    <location>
        <begin position="77"/>
        <end position="97"/>
    </location>
</feature>
<feature type="topological domain" description="Cytoplasmic" evidence="1">
    <location>
        <begin position="98"/>
        <end position="101"/>
    </location>
</feature>
<feature type="transmembrane region" description="Helical" evidence="1">
    <location>
        <begin position="102"/>
        <end position="124"/>
    </location>
</feature>
<feature type="topological domain" description="Periplasmic" evidence="1">
    <location>
        <begin position="125"/>
        <end position="137"/>
    </location>
</feature>
<feature type="transmembrane region" description="Helical" evidence="1">
    <location>
        <begin position="138"/>
        <end position="158"/>
    </location>
</feature>
<feature type="topological domain" description="Cytoplasmic" evidence="1">
    <location>
        <begin position="159"/>
        <end position="164"/>
    </location>
</feature>
<feature type="transmembrane region" description="Helical" evidence="1">
    <location>
        <begin position="165"/>
        <end position="185"/>
    </location>
</feature>
<feature type="topological domain" description="Periplasmic" evidence="1">
    <location>
        <begin position="186"/>
        <end position="196"/>
    </location>
</feature>
<feature type="transmembrane region" description="Helical" evidence="1">
    <location>
        <begin position="197"/>
        <end position="217"/>
    </location>
</feature>
<feature type="topological domain" description="Cytoplasmic" evidence="1">
    <location>
        <begin position="218"/>
        <end position="224"/>
    </location>
</feature>
<feature type="transmembrane region" description="Helical" evidence="1">
    <location>
        <begin position="225"/>
        <end position="245"/>
    </location>
</feature>
<feature type="topological domain" description="Periplasmic" evidence="1">
    <location>
        <begin position="246"/>
        <end position="262"/>
    </location>
</feature>
<feature type="transmembrane region" description="Helical" evidence="1">
    <location>
        <begin position="263"/>
        <end position="283"/>
    </location>
</feature>
<feature type="topological domain" description="Cytoplasmic" evidence="1">
    <location>
        <begin position="284"/>
        <end position="285"/>
    </location>
</feature>
<feature type="transmembrane region" description="Helical" evidence="1">
    <location>
        <begin position="286"/>
        <end position="306"/>
    </location>
</feature>
<feature type="topological domain" description="Periplasmic" evidence="1">
    <location>
        <begin position="307"/>
        <end position="341"/>
    </location>
</feature>
<feature type="transmembrane region" description="Helical" evidence="1">
    <location>
        <begin position="342"/>
        <end position="362"/>
    </location>
</feature>
<feature type="topological domain" description="Cytoplasmic" evidence="1">
    <location>
        <begin position="363"/>
        <end position="395"/>
    </location>
</feature>
<feature type="transmembrane region" description="Helical" evidence="1">
    <location>
        <begin position="396"/>
        <end position="416"/>
    </location>
</feature>
<feature type="topological domain" description="Periplasmic" evidence="1">
    <location>
        <begin position="417"/>
        <end position="430"/>
    </location>
</feature>
<feature type="transmembrane region" description="Helical" evidence="1">
    <location>
        <begin position="431"/>
        <end position="451"/>
    </location>
</feature>
<feature type="topological domain" description="Cytoplasmic" evidence="1">
    <location>
        <begin position="452"/>
        <end position="470"/>
    </location>
</feature>
<accession>B5R0C2</accession>
<comment type="subcellular location">
    <subcellularLocation>
        <location evidence="1">Cell inner membrane</location>
        <topology evidence="1">Multi-pass membrane protein</topology>
    </subcellularLocation>
</comment>
<comment type="similarity">
    <text evidence="1">Belongs to the major facilitator superfamily. TCR/Tet family.</text>
</comment>
<dbReference type="EMBL" id="AM933172">
    <property type="protein sequence ID" value="CAR33708.1"/>
    <property type="molecule type" value="Genomic_DNA"/>
</dbReference>
<dbReference type="RefSeq" id="WP_000137818.1">
    <property type="nucleotide sequence ID" value="NC_011294.1"/>
</dbReference>
<dbReference type="SMR" id="B5R0C2"/>
<dbReference type="KEGG" id="set:SEN2125"/>
<dbReference type="HOGENOM" id="CLU_000960_28_0_6"/>
<dbReference type="Proteomes" id="UP000000613">
    <property type="component" value="Chromosome"/>
</dbReference>
<dbReference type="GO" id="GO:0005886">
    <property type="term" value="C:plasma membrane"/>
    <property type="evidence" value="ECO:0007669"/>
    <property type="project" value="UniProtKB-SubCell"/>
</dbReference>
<dbReference type="GO" id="GO:0022857">
    <property type="term" value="F:transmembrane transporter activity"/>
    <property type="evidence" value="ECO:0007669"/>
    <property type="project" value="UniProtKB-UniRule"/>
</dbReference>
<dbReference type="CDD" id="cd17503">
    <property type="entry name" value="MFS_LmrB_MDR_like"/>
    <property type="match status" value="1"/>
</dbReference>
<dbReference type="FunFam" id="1.20.1250.20:FF:000021">
    <property type="entry name" value="Putative multidrug resistance protein MdtD"/>
    <property type="match status" value="1"/>
</dbReference>
<dbReference type="FunFam" id="1.20.1720.10:FF:000001">
    <property type="entry name" value="Putative multidrug resistance protein MdtD"/>
    <property type="match status" value="1"/>
</dbReference>
<dbReference type="Gene3D" id="1.20.1250.20">
    <property type="entry name" value="MFS general substrate transporter like domains"/>
    <property type="match status" value="1"/>
</dbReference>
<dbReference type="Gene3D" id="1.20.1720.10">
    <property type="entry name" value="Multidrug resistance protein D"/>
    <property type="match status" value="1"/>
</dbReference>
<dbReference type="HAMAP" id="MF_01577">
    <property type="entry name" value="MFS_MdtD"/>
    <property type="match status" value="1"/>
</dbReference>
<dbReference type="InterPro" id="IPR011701">
    <property type="entry name" value="MFS"/>
</dbReference>
<dbReference type="InterPro" id="IPR020846">
    <property type="entry name" value="MFS_dom"/>
</dbReference>
<dbReference type="InterPro" id="IPR036259">
    <property type="entry name" value="MFS_trans_sf"/>
</dbReference>
<dbReference type="InterPro" id="IPR023721">
    <property type="entry name" value="Multi-R_MdtD"/>
</dbReference>
<dbReference type="NCBIfam" id="NF007799">
    <property type="entry name" value="PRK10504.1"/>
    <property type="match status" value="1"/>
</dbReference>
<dbReference type="PANTHER" id="PTHR42718:SF46">
    <property type="entry name" value="BLR6921 PROTEIN"/>
    <property type="match status" value="1"/>
</dbReference>
<dbReference type="PANTHER" id="PTHR42718">
    <property type="entry name" value="MAJOR FACILITATOR SUPERFAMILY MULTIDRUG TRANSPORTER MFSC"/>
    <property type="match status" value="1"/>
</dbReference>
<dbReference type="Pfam" id="PF07690">
    <property type="entry name" value="MFS_1"/>
    <property type="match status" value="1"/>
</dbReference>
<dbReference type="PRINTS" id="PR01036">
    <property type="entry name" value="TCRTETB"/>
</dbReference>
<dbReference type="SUPFAM" id="SSF103473">
    <property type="entry name" value="MFS general substrate transporter"/>
    <property type="match status" value="1"/>
</dbReference>
<dbReference type="PROSITE" id="PS50850">
    <property type="entry name" value="MFS"/>
    <property type="match status" value="1"/>
</dbReference>
<organism>
    <name type="scientific">Salmonella enteritidis PT4 (strain P125109)</name>
    <dbReference type="NCBI Taxonomy" id="550537"/>
    <lineage>
        <taxon>Bacteria</taxon>
        <taxon>Pseudomonadati</taxon>
        <taxon>Pseudomonadota</taxon>
        <taxon>Gammaproteobacteria</taxon>
        <taxon>Enterobacterales</taxon>
        <taxon>Enterobacteriaceae</taxon>
        <taxon>Salmonella</taxon>
    </lineage>
</organism>
<protein>
    <recommendedName>
        <fullName evidence="1">Putative multidrug resistance protein MdtD</fullName>
    </recommendedName>
</protein>